<evidence type="ECO:0000255" key="1">
    <source>
        <dbReference type="HAMAP-Rule" id="MF_01216"/>
    </source>
</evidence>
<proteinExistence type="inferred from homology"/>
<name>AZOR1_MESFL</name>
<keyword id="KW-0285">Flavoprotein</keyword>
<keyword id="KW-0288">FMN</keyword>
<keyword id="KW-0520">NAD</keyword>
<keyword id="KW-0560">Oxidoreductase</keyword>
<keyword id="KW-1185">Reference proteome</keyword>
<gene>
    <name evidence="1" type="primary">azoR1</name>
    <name type="ordered locus">Mfl046</name>
</gene>
<reference key="1">
    <citation type="submission" date="2004-06" db="EMBL/GenBank/DDBJ databases">
        <authorList>
            <person name="Birren B.W."/>
            <person name="Stange-Thomann N."/>
            <person name="Hafez N."/>
            <person name="DeCaprio D."/>
            <person name="Fisher S."/>
            <person name="Butler J."/>
            <person name="Elkins T."/>
            <person name="Kodira C.D."/>
            <person name="Major J."/>
            <person name="Wang S."/>
            <person name="Nicol R."/>
            <person name="Nusbaum C."/>
        </authorList>
    </citation>
    <scope>NUCLEOTIDE SEQUENCE [LARGE SCALE GENOMIC DNA]</scope>
    <source>
        <strain>ATCC 33453 / NBRC 100688 / NCTC 11704 / L1</strain>
    </source>
</reference>
<accession>Q6F271</accession>
<sequence length="199" mass="22129">MSKLLVINGSVIPSDKSNSHEMARIFLEEYKKVNPNDEIIELDLNKLVVGTNVLTTETFSTYWGEEEGMKYINQLKDVDKLLVIAPMYNFHVSGMLKNYIDHVALANQTFSYKYATKGASIGLLDKLKVQILATQGAPKGWYPWGDHVAYLKGTWEFMGAKVAEPILLAGVKVEPLSTQSPKEIVSSITSDLIAAAKKF</sequence>
<organism>
    <name type="scientific">Mesoplasma florum (strain ATCC 33453 / NBRC 100688 / NCTC 11704 / L1)</name>
    <name type="common">Acholeplasma florum</name>
    <dbReference type="NCBI Taxonomy" id="265311"/>
    <lineage>
        <taxon>Bacteria</taxon>
        <taxon>Bacillati</taxon>
        <taxon>Mycoplasmatota</taxon>
        <taxon>Mollicutes</taxon>
        <taxon>Entomoplasmatales</taxon>
        <taxon>Entomoplasmataceae</taxon>
        <taxon>Mesoplasma</taxon>
    </lineage>
</organism>
<protein>
    <recommendedName>
        <fullName evidence="1">FMN-dependent NADH:quinone oxidoreductase 1</fullName>
        <ecNumber evidence="1">1.6.5.-</ecNumber>
    </recommendedName>
    <alternativeName>
        <fullName evidence="1">Azo-dye reductase 1</fullName>
    </alternativeName>
    <alternativeName>
        <fullName evidence="1">FMN-dependent NADH-azo compound oxidoreductase 1</fullName>
    </alternativeName>
    <alternativeName>
        <fullName evidence="1">FMN-dependent NADH-azoreductase 1</fullName>
        <ecNumber evidence="1">1.7.1.17</ecNumber>
    </alternativeName>
</protein>
<comment type="function">
    <text evidence="1">Quinone reductase that provides resistance to thiol-specific stress caused by electrophilic quinones.</text>
</comment>
<comment type="function">
    <text evidence="1">Also exhibits azoreductase activity. Catalyzes the reductive cleavage of the azo bond in aromatic azo compounds to the corresponding amines.</text>
</comment>
<comment type="catalytic activity">
    <reaction evidence="1">
        <text>2 a quinone + NADH + H(+) = 2 a 1,4-benzosemiquinone + NAD(+)</text>
        <dbReference type="Rhea" id="RHEA:65952"/>
        <dbReference type="ChEBI" id="CHEBI:15378"/>
        <dbReference type="ChEBI" id="CHEBI:57540"/>
        <dbReference type="ChEBI" id="CHEBI:57945"/>
        <dbReference type="ChEBI" id="CHEBI:132124"/>
        <dbReference type="ChEBI" id="CHEBI:134225"/>
    </reaction>
</comment>
<comment type="catalytic activity">
    <reaction evidence="1">
        <text>N,N-dimethyl-1,4-phenylenediamine + anthranilate + 2 NAD(+) = 2-(4-dimethylaminophenyl)diazenylbenzoate + 2 NADH + 2 H(+)</text>
        <dbReference type="Rhea" id="RHEA:55872"/>
        <dbReference type="ChEBI" id="CHEBI:15378"/>
        <dbReference type="ChEBI" id="CHEBI:15783"/>
        <dbReference type="ChEBI" id="CHEBI:16567"/>
        <dbReference type="ChEBI" id="CHEBI:57540"/>
        <dbReference type="ChEBI" id="CHEBI:57945"/>
        <dbReference type="ChEBI" id="CHEBI:71579"/>
        <dbReference type="EC" id="1.7.1.17"/>
    </reaction>
</comment>
<comment type="cofactor">
    <cofactor evidence="1">
        <name>FMN</name>
        <dbReference type="ChEBI" id="CHEBI:58210"/>
    </cofactor>
    <text evidence="1">Binds 1 FMN per subunit.</text>
</comment>
<comment type="subunit">
    <text evidence="1">Homodimer.</text>
</comment>
<comment type="similarity">
    <text evidence="1">Belongs to the azoreductase type 1 family.</text>
</comment>
<feature type="chain" id="PRO_0000245929" description="FMN-dependent NADH:quinone oxidoreductase 1">
    <location>
        <begin position="1"/>
        <end position="199"/>
    </location>
</feature>
<feature type="binding site" evidence="1">
    <location>
        <position position="10"/>
    </location>
    <ligand>
        <name>FMN</name>
        <dbReference type="ChEBI" id="CHEBI:58210"/>
    </ligand>
</feature>
<feature type="binding site" evidence="1">
    <location>
        <begin position="17"/>
        <end position="19"/>
    </location>
    <ligand>
        <name>FMN</name>
        <dbReference type="ChEBI" id="CHEBI:58210"/>
    </ligand>
</feature>
<feature type="binding site" evidence="1">
    <location>
        <begin position="87"/>
        <end position="90"/>
    </location>
    <ligand>
        <name>FMN</name>
        <dbReference type="ChEBI" id="CHEBI:58210"/>
    </ligand>
</feature>
<dbReference type="EC" id="1.6.5.-" evidence="1"/>
<dbReference type="EC" id="1.7.1.17" evidence="1"/>
<dbReference type="EMBL" id="AE017263">
    <property type="protein sequence ID" value="AAT75402.1"/>
    <property type="molecule type" value="Genomic_DNA"/>
</dbReference>
<dbReference type="RefSeq" id="WP_011182943.1">
    <property type="nucleotide sequence ID" value="NC_006055.1"/>
</dbReference>
<dbReference type="RefSeq" id="YP_053286.1">
    <property type="nucleotide sequence ID" value="NC_006055.1"/>
</dbReference>
<dbReference type="SMR" id="Q6F271"/>
<dbReference type="STRING" id="265311.Mfl046"/>
<dbReference type="PaxDb" id="265311-Mfl046"/>
<dbReference type="EnsemblBacteria" id="AAT75402">
    <property type="protein sequence ID" value="AAT75402"/>
    <property type="gene ID" value="Mfl046"/>
</dbReference>
<dbReference type="GeneID" id="2897701"/>
<dbReference type="KEGG" id="mfl:Mfl046"/>
<dbReference type="PATRIC" id="fig|265311.5.peg.46"/>
<dbReference type="eggNOG" id="COG1182">
    <property type="taxonomic scope" value="Bacteria"/>
</dbReference>
<dbReference type="HOGENOM" id="CLU_088964_2_0_14"/>
<dbReference type="OrthoDB" id="9805013at2"/>
<dbReference type="Proteomes" id="UP000006647">
    <property type="component" value="Chromosome"/>
</dbReference>
<dbReference type="GO" id="GO:0009055">
    <property type="term" value="F:electron transfer activity"/>
    <property type="evidence" value="ECO:0007669"/>
    <property type="project" value="UniProtKB-UniRule"/>
</dbReference>
<dbReference type="GO" id="GO:0010181">
    <property type="term" value="F:FMN binding"/>
    <property type="evidence" value="ECO:0007669"/>
    <property type="project" value="UniProtKB-UniRule"/>
</dbReference>
<dbReference type="GO" id="GO:0016652">
    <property type="term" value="F:oxidoreductase activity, acting on NAD(P)H as acceptor"/>
    <property type="evidence" value="ECO:0007669"/>
    <property type="project" value="UniProtKB-UniRule"/>
</dbReference>
<dbReference type="GO" id="GO:0016655">
    <property type="term" value="F:oxidoreductase activity, acting on NAD(P)H, quinone or similar compound as acceptor"/>
    <property type="evidence" value="ECO:0007669"/>
    <property type="project" value="InterPro"/>
</dbReference>
<dbReference type="Gene3D" id="3.40.50.360">
    <property type="match status" value="1"/>
</dbReference>
<dbReference type="HAMAP" id="MF_01216">
    <property type="entry name" value="Azoreductase_type1"/>
    <property type="match status" value="1"/>
</dbReference>
<dbReference type="InterPro" id="IPR003680">
    <property type="entry name" value="Flavodoxin_fold"/>
</dbReference>
<dbReference type="InterPro" id="IPR029039">
    <property type="entry name" value="Flavoprotein-like_sf"/>
</dbReference>
<dbReference type="InterPro" id="IPR050104">
    <property type="entry name" value="FMN-dep_NADH:Q_OxRdtase_AzoR1"/>
</dbReference>
<dbReference type="InterPro" id="IPR023048">
    <property type="entry name" value="NADH:quinone_OxRdtase_FMN_depd"/>
</dbReference>
<dbReference type="NCBIfam" id="NF002370">
    <property type="entry name" value="PRK01355.1"/>
    <property type="match status" value="1"/>
</dbReference>
<dbReference type="PANTHER" id="PTHR43741">
    <property type="entry name" value="FMN-DEPENDENT NADH-AZOREDUCTASE 1"/>
    <property type="match status" value="1"/>
</dbReference>
<dbReference type="PANTHER" id="PTHR43741:SF4">
    <property type="entry name" value="FMN-DEPENDENT NADH:QUINONE OXIDOREDUCTASE"/>
    <property type="match status" value="1"/>
</dbReference>
<dbReference type="Pfam" id="PF02525">
    <property type="entry name" value="Flavodoxin_2"/>
    <property type="match status" value="1"/>
</dbReference>
<dbReference type="SUPFAM" id="SSF52218">
    <property type="entry name" value="Flavoproteins"/>
    <property type="match status" value="1"/>
</dbReference>